<protein>
    <recommendedName>
        <fullName>Bone morphogenetic protein 2</fullName>
        <shortName>BMP-2</shortName>
    </recommendedName>
</protein>
<comment type="function">
    <text evidence="2 4">Growth factor of the TGF-beta superfamily that plays essential roles in many developmental processes, including cardiogenesis, neurogenesis, and osteogenesis. Induces cartilage and bone formation. Initiates the canonical BMP signaling cascade by associating with type I receptor BMPR1A and type II receptor BMPR2. Once all three components are bound together in a complex at the cell surface, BMPR2 phosphorylates and activates BMPR1A. In turn, BMPR1A propagates signal by phosphorylating SMAD1/5/8 that travel to the nucleus and act as activators and repressors of transcription of target genes. Also acts to promote expression of HAMP, via the interaction with its receptor BMPR1A/ALK3 (By similarity). Can also signal through non-canonical pathways such as ERK/MAP kinase signaling cascade that regulates osteoblast differentiation. Also stimulates the differentiation of myoblasts into osteoblasts via the EIF2AK3-EIF2A-ATF4 pathway by stimulating EIF2A phosphorylation which leads to increased expression of ATF4 which plays a central role in osteoblast differentiation. Acts as a positive regulator of odontoblast differentiation during mesenchymal tooth germ formation, expression is repressed during the bell stage by MSX1-mediated inhibition of CTNNB1 signaling (By similarity).</text>
</comment>
<comment type="subunit">
    <text evidence="2 4">Homodimer; disulfide-linked. Interacts with SOSTDC1 (By similarity). Interacts with GREM2, RGMA, RGMB and RGMC. Interacts with ASPN (By similarity). Interacts with MAFP5 (By similarity). Interacts with FBN1 (via N-terminal domain) and FBN2. Interacts with type I receptor BMPR1A. Interacts with type II receptor BMPR2 (By similarity). Interacts with ERFE (By similarity). Interacts with BMPR1A/ALK3; the interaction may induce HAMP expression (By similarity). Interacts with TGFBR3 (By similarity).</text>
</comment>
<comment type="subcellular location">
    <subcellularLocation>
        <location evidence="2">Secreted</location>
    </subcellularLocation>
</comment>
<comment type="similarity">
    <text evidence="7">Belongs to the TGF-beta family.</text>
</comment>
<evidence type="ECO:0000250" key="1"/>
<evidence type="ECO:0000250" key="2">
    <source>
        <dbReference type="UniProtKB" id="P12643"/>
    </source>
</evidence>
<evidence type="ECO:0000250" key="3">
    <source>
        <dbReference type="UniProtKB" id="P12644"/>
    </source>
</evidence>
<evidence type="ECO:0000250" key="4">
    <source>
        <dbReference type="UniProtKB" id="P21274"/>
    </source>
</evidence>
<evidence type="ECO:0000255" key="5"/>
<evidence type="ECO:0000256" key="6">
    <source>
        <dbReference type="SAM" id="MobiDB-lite"/>
    </source>
</evidence>
<evidence type="ECO:0000305" key="7"/>
<feature type="signal peptide" evidence="5">
    <location>
        <begin position="1"/>
        <end position="23"/>
    </location>
</feature>
<feature type="propeptide" id="PRO_0000033822" description="Cleaved by PCSK5" evidence="1">
    <location>
        <begin position="24"/>
        <end position="282"/>
    </location>
</feature>
<feature type="chain" id="PRO_0000033823" description="Bone morphogenetic protein 2">
    <location>
        <begin position="283"/>
        <end position="396"/>
    </location>
</feature>
<feature type="region of interest" description="Disordered" evidence="6">
    <location>
        <begin position="272"/>
        <end position="293"/>
    </location>
</feature>
<feature type="compositionally biased region" description="Basic residues" evidence="6">
    <location>
        <begin position="274"/>
        <end position="293"/>
    </location>
</feature>
<feature type="modified residue" description="Phosphoserine" evidence="3">
    <location>
        <position position="87"/>
    </location>
</feature>
<feature type="glycosylation site" description="N-linked (GlcNAc...) asparagine" evidence="5">
    <location>
        <position position="135"/>
    </location>
</feature>
<feature type="glycosylation site" description="N-linked (GlcNAc...) asparagine" evidence="5">
    <location>
        <position position="163"/>
    </location>
</feature>
<feature type="glycosylation site" description="N-linked (GlcNAc...) asparagine" evidence="5">
    <location>
        <position position="164"/>
    </location>
</feature>
<feature type="glycosylation site" description="N-linked (GlcNAc...) asparagine" evidence="5">
    <location>
        <position position="200"/>
    </location>
</feature>
<feature type="glycosylation site" description="N-linked (GlcNAc...) asparagine" evidence="5">
    <location>
        <position position="338"/>
    </location>
</feature>
<feature type="disulfide bond" evidence="1">
    <location>
        <begin position="296"/>
        <end position="361"/>
    </location>
</feature>
<feature type="disulfide bond" evidence="1">
    <location>
        <begin position="325"/>
        <end position="393"/>
    </location>
</feature>
<feature type="disulfide bond" evidence="1">
    <location>
        <begin position="329"/>
        <end position="395"/>
    </location>
</feature>
<feature type="disulfide bond" description="Interchain" evidence="1">
    <location>
        <position position="360"/>
    </location>
</feature>
<gene>
    <name type="primary">BMP2</name>
</gene>
<organism>
    <name type="scientific">Dama dama</name>
    <name type="common">Fallow deer</name>
    <name type="synonym">Cervus dama</name>
    <dbReference type="NCBI Taxonomy" id="30532"/>
    <lineage>
        <taxon>Eukaryota</taxon>
        <taxon>Metazoa</taxon>
        <taxon>Chordata</taxon>
        <taxon>Craniata</taxon>
        <taxon>Vertebrata</taxon>
        <taxon>Euteleostomi</taxon>
        <taxon>Mammalia</taxon>
        <taxon>Eutheria</taxon>
        <taxon>Laurasiatheria</taxon>
        <taxon>Artiodactyla</taxon>
        <taxon>Ruminantia</taxon>
        <taxon>Pecora</taxon>
        <taxon>Cervidae</taxon>
        <taxon>Cervinae</taxon>
        <taxon>Dama</taxon>
    </lineage>
</organism>
<accession>O19006</accession>
<proteinExistence type="evidence at transcript level"/>
<reference key="1">
    <citation type="journal article" date="1997" name="Biochim. Biophys. Acta">
        <title>Bone morphogenetic protein 2 transcripts in rapidly developing deer antler tissue contain an extended 5' non-coding region arising from a distal promoter.</title>
        <authorList>
            <person name="Feng J.Q."/>
            <person name="Chen D."/>
            <person name="Ghosh-Choudhury N."/>
            <person name="Esparza J."/>
            <person name="Mundy G.R."/>
            <person name="Harris S.E."/>
        </authorList>
    </citation>
    <scope>NUCLEOTIDE SEQUENCE [MRNA]</scope>
    <source>
        <tissue>Antler</tissue>
    </source>
</reference>
<dbReference type="EMBL" id="AJ001817">
    <property type="protein sequence ID" value="CAA05033.1"/>
    <property type="molecule type" value="mRNA"/>
</dbReference>
<dbReference type="SMR" id="O19006"/>
<dbReference type="GlyCosmos" id="O19006">
    <property type="glycosylation" value="5 sites, No reported glycans"/>
</dbReference>
<dbReference type="GO" id="GO:0005615">
    <property type="term" value="C:extracellular space"/>
    <property type="evidence" value="ECO:0007669"/>
    <property type="project" value="UniProtKB-KW"/>
</dbReference>
<dbReference type="GO" id="GO:0005125">
    <property type="term" value="F:cytokine activity"/>
    <property type="evidence" value="ECO:0007669"/>
    <property type="project" value="UniProtKB-KW"/>
</dbReference>
<dbReference type="GO" id="GO:0008083">
    <property type="term" value="F:growth factor activity"/>
    <property type="evidence" value="ECO:0007669"/>
    <property type="project" value="UniProtKB-KW"/>
</dbReference>
<dbReference type="GO" id="GO:0051216">
    <property type="term" value="P:cartilage development"/>
    <property type="evidence" value="ECO:0007669"/>
    <property type="project" value="UniProtKB-KW"/>
</dbReference>
<dbReference type="GO" id="GO:0030154">
    <property type="term" value="P:cell differentiation"/>
    <property type="evidence" value="ECO:0007669"/>
    <property type="project" value="UniProtKB-KW"/>
</dbReference>
<dbReference type="GO" id="GO:0001503">
    <property type="term" value="P:ossification"/>
    <property type="evidence" value="ECO:0007669"/>
    <property type="project" value="UniProtKB-KW"/>
</dbReference>
<dbReference type="GO" id="GO:1901331">
    <property type="term" value="P:positive regulation of odontoblast differentiation"/>
    <property type="evidence" value="ECO:0000250"/>
    <property type="project" value="UniProtKB"/>
</dbReference>
<dbReference type="CDD" id="cd19390">
    <property type="entry name" value="TGF_beta_BMP2"/>
    <property type="match status" value="1"/>
</dbReference>
<dbReference type="FunFam" id="2.10.90.10:FF:000103">
    <property type="entry name" value="Bone morphogenetic protein 16"/>
    <property type="match status" value="1"/>
</dbReference>
<dbReference type="FunFam" id="2.60.120.970:FF:000009">
    <property type="entry name" value="bone morphogenetic protein 2"/>
    <property type="match status" value="1"/>
</dbReference>
<dbReference type="Gene3D" id="2.60.120.970">
    <property type="match status" value="1"/>
</dbReference>
<dbReference type="Gene3D" id="2.10.90.10">
    <property type="entry name" value="Cystine-knot cytokines"/>
    <property type="match status" value="1"/>
</dbReference>
<dbReference type="InterPro" id="IPR047953">
    <property type="entry name" value="BMP2_TGF_beta-like"/>
</dbReference>
<dbReference type="InterPro" id="IPR029034">
    <property type="entry name" value="Cystine-knot_cytokine"/>
</dbReference>
<dbReference type="InterPro" id="IPR001839">
    <property type="entry name" value="TGF-b_C"/>
</dbReference>
<dbReference type="InterPro" id="IPR001111">
    <property type="entry name" value="TGF-b_propeptide"/>
</dbReference>
<dbReference type="InterPro" id="IPR015615">
    <property type="entry name" value="TGF-beta-rel"/>
</dbReference>
<dbReference type="InterPro" id="IPR017948">
    <property type="entry name" value="TGFb_CS"/>
</dbReference>
<dbReference type="PANTHER" id="PTHR11848:SF143">
    <property type="entry name" value="BONE MORPHOGENETIC PROTEIN 2"/>
    <property type="match status" value="1"/>
</dbReference>
<dbReference type="PANTHER" id="PTHR11848">
    <property type="entry name" value="TGF-BETA FAMILY"/>
    <property type="match status" value="1"/>
</dbReference>
<dbReference type="Pfam" id="PF00019">
    <property type="entry name" value="TGF_beta"/>
    <property type="match status" value="1"/>
</dbReference>
<dbReference type="Pfam" id="PF00688">
    <property type="entry name" value="TGFb_propeptide"/>
    <property type="match status" value="1"/>
</dbReference>
<dbReference type="PRINTS" id="PR00669">
    <property type="entry name" value="INHIBINA"/>
</dbReference>
<dbReference type="SMART" id="SM00204">
    <property type="entry name" value="TGFB"/>
    <property type="match status" value="1"/>
</dbReference>
<dbReference type="SUPFAM" id="SSF57501">
    <property type="entry name" value="Cystine-knot cytokines"/>
    <property type="match status" value="1"/>
</dbReference>
<dbReference type="PROSITE" id="PS00250">
    <property type="entry name" value="TGF_BETA_1"/>
    <property type="match status" value="1"/>
</dbReference>
<dbReference type="PROSITE" id="PS51362">
    <property type="entry name" value="TGF_BETA_2"/>
    <property type="match status" value="1"/>
</dbReference>
<name>BMP2_DAMDA</name>
<keyword id="KW-0891">Chondrogenesis</keyword>
<keyword id="KW-0165">Cleavage on pair of basic residues</keyword>
<keyword id="KW-0202">Cytokine</keyword>
<keyword id="KW-0217">Developmental protein</keyword>
<keyword id="KW-0221">Differentiation</keyword>
<keyword id="KW-1015">Disulfide bond</keyword>
<keyword id="KW-0325">Glycoprotein</keyword>
<keyword id="KW-0339">Growth factor</keyword>
<keyword id="KW-0892">Osteogenesis</keyword>
<keyword id="KW-0597">Phosphoprotein</keyword>
<keyword id="KW-0964">Secreted</keyword>
<keyword id="KW-0732">Signal</keyword>
<sequence>MVAGTRCLLALLLPQVLLGGAAGLIPELGRRKFAASWPGRSSSQPSDDVLSEFELRLLSMFGLKQRPTPSRDPVVPPYMLDLYRLHSGQPGAPAPGHRLERAASLANTVRTFHHEESLEELPEMSGKTTRRFFFNLTSIPTEEFITSAELQVFGKHMPEALENNSSFHHRINIFEIIKPATANSKFPVTRLLDTRLVTQNASRWESFDVTPAVMRWTAQGLTNHGFVVEVAHPEDSYGASKRHVRISRSLHQDEHSWSQIRPLLVTFGHDGKGHPLHRREKRQAKHKQRKRLKSSCKRHPLYVDFSDVGWNDWIVAPPGYHAFYCHGECPFPLADHLNSTNHAIVQTLVNSVNSKIPKACCVPTELSAISMLYLDENEKVVLKNYQDMVVEGCGCR</sequence>